<name>NBP35_NEUCR</name>
<sequence length="344" mass="36450">MAPSLEAEPESVASVLANPQKPQLVAPEPEHCPGPESQQAGTADSCAGCPNQAICATAPKGPDPDIPLITARLSGVKHKILILSGKGGVGKSTFTSLLAHAFATNAEQTVGVMDTDICGPSIPKMLGVEGETIHVSSTGWSPAWAMDNLAVMSIQFMLPNRDDAIIWRGPKKNGLIKQFLKDVEWGDLDFLLVDTPPGTSDEHLSVNTYLKKSGIDGAVMVTTPQEVSLLDVRKEIDFCRKAGIKVLGLVENMSGFVCPKCTHESEIFKATTGGGRKLAEEMGIAFLGSVPLDPRIGMACDYGESFFDSFPDSPACRALKGVVKGLATEMGLDPEVVMPEEDDA</sequence>
<gene>
    <name type="primary">nbp35</name>
    <name type="ORF">NCU08825</name>
</gene>
<accession>Q7S8Z0</accession>
<organism>
    <name type="scientific">Neurospora crassa (strain ATCC 24698 / 74-OR23-1A / CBS 708.71 / DSM 1257 / FGSC 987)</name>
    <dbReference type="NCBI Taxonomy" id="367110"/>
    <lineage>
        <taxon>Eukaryota</taxon>
        <taxon>Fungi</taxon>
        <taxon>Dikarya</taxon>
        <taxon>Ascomycota</taxon>
        <taxon>Pezizomycotina</taxon>
        <taxon>Sordariomycetes</taxon>
        <taxon>Sordariomycetidae</taxon>
        <taxon>Sordariales</taxon>
        <taxon>Sordariaceae</taxon>
        <taxon>Neurospora</taxon>
    </lineage>
</organism>
<evidence type="ECO:0000255" key="1">
    <source>
        <dbReference type="HAMAP-Rule" id="MF_03038"/>
    </source>
</evidence>
<evidence type="ECO:0000256" key="2">
    <source>
        <dbReference type="SAM" id="MobiDB-lite"/>
    </source>
</evidence>
<protein>
    <recommendedName>
        <fullName evidence="1">Cytosolic Fe-S cluster assembly factor nbp35</fullName>
    </recommendedName>
    <alternativeName>
        <fullName evidence="1">Nucleotide-binding protein 35</fullName>
    </alternativeName>
</protein>
<keyword id="KW-0004">4Fe-4S</keyword>
<keyword id="KW-0067">ATP-binding</keyword>
<keyword id="KW-0963">Cytoplasm</keyword>
<keyword id="KW-0408">Iron</keyword>
<keyword id="KW-0411">Iron-sulfur</keyword>
<keyword id="KW-0479">Metal-binding</keyword>
<keyword id="KW-0547">Nucleotide-binding</keyword>
<keyword id="KW-1185">Reference proteome</keyword>
<comment type="function">
    <text evidence="1">Component of the cytosolic iron-sulfur (Fe/S) protein assembly (CIA) machinery. Required for maturation of extramitochondrial Fe-S proteins. The NBP35-CFD1 heterotetramer forms a Fe-S scaffold complex, mediating the de novo assembly of an Fe-S cluster and its transfer to target apoproteins.</text>
</comment>
<comment type="cofactor">
    <cofactor evidence="1">
        <name>[4Fe-4S] cluster</name>
        <dbReference type="ChEBI" id="CHEBI:49883"/>
    </cofactor>
    <text evidence="1">Binds 4 [4Fe-4S] clusters per heterotetramer. Contains two stable clusters in the N-termini of NBP35 and two labile, bridging clusters between subunits of the NBP35-CFD1 heterotetramer.</text>
</comment>
<comment type="subunit">
    <text evidence="1">Heterotetramer of 2 NBP35 and 2 CFD1 chains.</text>
</comment>
<comment type="subcellular location">
    <subcellularLocation>
        <location evidence="1">Cytoplasm</location>
    </subcellularLocation>
</comment>
<comment type="similarity">
    <text evidence="1">Belongs to the Mrp/NBP35 ATP-binding proteins family. NUBP1/NBP35 subfamily.</text>
</comment>
<reference key="1">
    <citation type="journal article" date="2003" name="Nature">
        <title>The genome sequence of the filamentous fungus Neurospora crassa.</title>
        <authorList>
            <person name="Galagan J.E."/>
            <person name="Calvo S.E."/>
            <person name="Borkovich K.A."/>
            <person name="Selker E.U."/>
            <person name="Read N.D."/>
            <person name="Jaffe D.B."/>
            <person name="FitzHugh W."/>
            <person name="Ma L.-J."/>
            <person name="Smirnov S."/>
            <person name="Purcell S."/>
            <person name="Rehman B."/>
            <person name="Elkins T."/>
            <person name="Engels R."/>
            <person name="Wang S."/>
            <person name="Nielsen C.B."/>
            <person name="Butler J."/>
            <person name="Endrizzi M."/>
            <person name="Qui D."/>
            <person name="Ianakiev P."/>
            <person name="Bell-Pedersen D."/>
            <person name="Nelson M.A."/>
            <person name="Werner-Washburne M."/>
            <person name="Selitrennikoff C.P."/>
            <person name="Kinsey J.A."/>
            <person name="Braun E.L."/>
            <person name="Zelter A."/>
            <person name="Schulte U."/>
            <person name="Kothe G.O."/>
            <person name="Jedd G."/>
            <person name="Mewes H.-W."/>
            <person name="Staben C."/>
            <person name="Marcotte E."/>
            <person name="Greenberg D."/>
            <person name="Roy A."/>
            <person name="Foley K."/>
            <person name="Naylor J."/>
            <person name="Stange-Thomann N."/>
            <person name="Barrett R."/>
            <person name="Gnerre S."/>
            <person name="Kamal M."/>
            <person name="Kamvysselis M."/>
            <person name="Mauceli E.W."/>
            <person name="Bielke C."/>
            <person name="Rudd S."/>
            <person name="Frishman D."/>
            <person name="Krystofova S."/>
            <person name="Rasmussen C."/>
            <person name="Metzenberg R.L."/>
            <person name="Perkins D.D."/>
            <person name="Kroken S."/>
            <person name="Cogoni C."/>
            <person name="Macino G."/>
            <person name="Catcheside D.E.A."/>
            <person name="Li W."/>
            <person name="Pratt R.J."/>
            <person name="Osmani S.A."/>
            <person name="DeSouza C.P.C."/>
            <person name="Glass N.L."/>
            <person name="Orbach M.J."/>
            <person name="Berglund J.A."/>
            <person name="Voelker R."/>
            <person name="Yarden O."/>
            <person name="Plamann M."/>
            <person name="Seiler S."/>
            <person name="Dunlap J.C."/>
            <person name="Radford A."/>
            <person name="Aramayo R."/>
            <person name="Natvig D.O."/>
            <person name="Alex L.A."/>
            <person name="Mannhaupt G."/>
            <person name="Ebbole D.J."/>
            <person name="Freitag M."/>
            <person name="Paulsen I."/>
            <person name="Sachs M.S."/>
            <person name="Lander E.S."/>
            <person name="Nusbaum C."/>
            <person name="Birren B.W."/>
        </authorList>
    </citation>
    <scope>NUCLEOTIDE SEQUENCE [LARGE SCALE GENOMIC DNA]</scope>
    <source>
        <strain>ATCC 24698 / 74-OR23-1A / CBS 708.71 / DSM 1257 / FGSC 987</strain>
    </source>
</reference>
<proteinExistence type="inferred from homology"/>
<feature type="chain" id="PRO_0000278900" description="Cytosolic Fe-S cluster assembly factor nbp35">
    <location>
        <begin position="1"/>
        <end position="344"/>
    </location>
</feature>
<feature type="region of interest" description="Disordered" evidence="2">
    <location>
        <begin position="19"/>
        <end position="43"/>
    </location>
</feature>
<feature type="binding site" evidence="1">
    <location>
        <position position="32"/>
    </location>
    <ligand>
        <name>[4Fe-4S] cluster</name>
        <dbReference type="ChEBI" id="CHEBI:49883"/>
        <label>1</label>
    </ligand>
</feature>
<feature type="binding site" evidence="1">
    <location>
        <position position="46"/>
    </location>
    <ligand>
        <name>[4Fe-4S] cluster</name>
        <dbReference type="ChEBI" id="CHEBI:49883"/>
        <label>1</label>
    </ligand>
</feature>
<feature type="binding site" evidence="1">
    <location>
        <position position="49"/>
    </location>
    <ligand>
        <name>[4Fe-4S] cluster</name>
        <dbReference type="ChEBI" id="CHEBI:49883"/>
        <label>1</label>
    </ligand>
</feature>
<feature type="binding site" evidence="1">
    <location>
        <position position="55"/>
    </location>
    <ligand>
        <name>[4Fe-4S] cluster</name>
        <dbReference type="ChEBI" id="CHEBI:49883"/>
        <label>1</label>
    </ligand>
</feature>
<feature type="binding site" evidence="1">
    <location>
        <begin position="85"/>
        <end position="92"/>
    </location>
    <ligand>
        <name>ATP</name>
        <dbReference type="ChEBI" id="CHEBI:30616"/>
    </ligand>
</feature>
<feature type="binding site" evidence="1">
    <location>
        <position position="258"/>
    </location>
    <ligand>
        <name>[4Fe-4S] cluster</name>
        <dbReference type="ChEBI" id="CHEBI:49883"/>
        <label>2</label>
        <note>ligand shared with heterodimeric partner</note>
    </ligand>
</feature>
<feature type="binding site" evidence="1">
    <location>
        <position position="261"/>
    </location>
    <ligand>
        <name>[4Fe-4S] cluster</name>
        <dbReference type="ChEBI" id="CHEBI:49883"/>
        <label>2</label>
        <note>ligand shared with heterodimeric partner</note>
    </ligand>
</feature>
<dbReference type="EMBL" id="CM002239">
    <property type="protein sequence ID" value="EAA32800.1"/>
    <property type="molecule type" value="Genomic_DNA"/>
</dbReference>
<dbReference type="RefSeq" id="XP_962036.1">
    <property type="nucleotide sequence ID" value="XM_956943.2"/>
</dbReference>
<dbReference type="SMR" id="Q7S8Z0"/>
<dbReference type="FunCoup" id="Q7S8Z0">
    <property type="interactions" value="562"/>
</dbReference>
<dbReference type="STRING" id="367110.Q7S8Z0"/>
<dbReference type="PaxDb" id="5141-EFNCRP00000008745"/>
<dbReference type="EnsemblFungi" id="EAA32800">
    <property type="protein sequence ID" value="EAA32800"/>
    <property type="gene ID" value="NCU08825"/>
</dbReference>
<dbReference type="GeneID" id="3878196"/>
<dbReference type="KEGG" id="ncr:NCU08825"/>
<dbReference type="VEuPathDB" id="FungiDB:NCU08825"/>
<dbReference type="HOGENOM" id="CLU_024839_0_1_1"/>
<dbReference type="InParanoid" id="Q7S8Z0"/>
<dbReference type="OMA" id="VSGCPMR"/>
<dbReference type="OrthoDB" id="1741334at2759"/>
<dbReference type="Proteomes" id="UP000001805">
    <property type="component" value="Chromosome 4, Linkage Group IV"/>
</dbReference>
<dbReference type="GO" id="GO:0005829">
    <property type="term" value="C:cytosol"/>
    <property type="evidence" value="ECO:0000318"/>
    <property type="project" value="GO_Central"/>
</dbReference>
<dbReference type="GO" id="GO:0051539">
    <property type="term" value="F:4 iron, 4 sulfur cluster binding"/>
    <property type="evidence" value="ECO:0007669"/>
    <property type="project" value="UniProtKB-UniRule"/>
</dbReference>
<dbReference type="GO" id="GO:0005524">
    <property type="term" value="F:ATP binding"/>
    <property type="evidence" value="ECO:0007669"/>
    <property type="project" value="UniProtKB-KW"/>
</dbReference>
<dbReference type="GO" id="GO:0140663">
    <property type="term" value="F:ATP-dependent FeS chaperone activity"/>
    <property type="evidence" value="ECO:0007669"/>
    <property type="project" value="InterPro"/>
</dbReference>
<dbReference type="GO" id="GO:0051536">
    <property type="term" value="F:iron-sulfur cluster binding"/>
    <property type="evidence" value="ECO:0000318"/>
    <property type="project" value="GO_Central"/>
</dbReference>
<dbReference type="GO" id="GO:0046872">
    <property type="term" value="F:metal ion binding"/>
    <property type="evidence" value="ECO:0007669"/>
    <property type="project" value="UniProtKB-KW"/>
</dbReference>
<dbReference type="GO" id="GO:0016226">
    <property type="term" value="P:iron-sulfur cluster assembly"/>
    <property type="evidence" value="ECO:0000318"/>
    <property type="project" value="GO_Central"/>
</dbReference>
<dbReference type="CDD" id="cd02037">
    <property type="entry name" value="Mrp_NBP35"/>
    <property type="match status" value="1"/>
</dbReference>
<dbReference type="FunFam" id="3.40.50.300:FF:000427">
    <property type="entry name" value="Cytosolic Fe-S cluster assembly factor NUBP1"/>
    <property type="match status" value="1"/>
</dbReference>
<dbReference type="Gene3D" id="3.40.50.300">
    <property type="entry name" value="P-loop containing nucleotide triphosphate hydrolases"/>
    <property type="match status" value="1"/>
</dbReference>
<dbReference type="HAMAP" id="MF_02040">
    <property type="entry name" value="Mrp_NBP35"/>
    <property type="match status" value="1"/>
</dbReference>
<dbReference type="HAMAP" id="MF_03038">
    <property type="entry name" value="NUBP1"/>
    <property type="match status" value="1"/>
</dbReference>
<dbReference type="InterPro" id="IPR000808">
    <property type="entry name" value="Mrp-like_CS"/>
</dbReference>
<dbReference type="InterPro" id="IPR019591">
    <property type="entry name" value="Mrp/NBP35_ATP-bd"/>
</dbReference>
<dbReference type="InterPro" id="IPR028601">
    <property type="entry name" value="NUBP1/Nbp35"/>
</dbReference>
<dbReference type="InterPro" id="IPR027417">
    <property type="entry name" value="P-loop_NTPase"/>
</dbReference>
<dbReference type="InterPro" id="IPR033756">
    <property type="entry name" value="YlxH/NBP35"/>
</dbReference>
<dbReference type="PANTHER" id="PTHR23264:SF35">
    <property type="entry name" value="CYTOSOLIC FE-S CLUSTER ASSEMBLY FACTOR NUBP1"/>
    <property type="match status" value="1"/>
</dbReference>
<dbReference type="PANTHER" id="PTHR23264">
    <property type="entry name" value="NUCLEOTIDE-BINDING PROTEIN NBP35 YEAST -RELATED"/>
    <property type="match status" value="1"/>
</dbReference>
<dbReference type="Pfam" id="PF10609">
    <property type="entry name" value="ParA"/>
    <property type="match status" value="1"/>
</dbReference>
<dbReference type="SUPFAM" id="SSF52540">
    <property type="entry name" value="P-loop containing nucleoside triphosphate hydrolases"/>
    <property type="match status" value="1"/>
</dbReference>
<dbReference type="PROSITE" id="PS01215">
    <property type="entry name" value="MRP"/>
    <property type="match status" value="1"/>
</dbReference>